<feature type="chain" id="PRO_1000061065" description="Probable butyrate kinase">
    <location>
        <begin position="1"/>
        <end position="367"/>
    </location>
</feature>
<name>BUK_BACHK</name>
<protein>
    <recommendedName>
        <fullName evidence="1">Probable butyrate kinase</fullName>
        <shortName evidence="1">BK</shortName>
        <ecNumber evidence="1">2.7.2.7</ecNumber>
    </recommendedName>
    <alternativeName>
        <fullName evidence="1">Branched-chain carboxylic acid kinase</fullName>
    </alternativeName>
</protein>
<proteinExistence type="inferred from homology"/>
<accession>Q6HE00</accession>
<evidence type="ECO:0000255" key="1">
    <source>
        <dbReference type="HAMAP-Rule" id="MF_00542"/>
    </source>
</evidence>
<comment type="catalytic activity">
    <reaction evidence="1">
        <text>butanoate + ATP = butanoyl phosphate + ADP</text>
        <dbReference type="Rhea" id="RHEA:13585"/>
        <dbReference type="ChEBI" id="CHEBI:17968"/>
        <dbReference type="ChEBI" id="CHEBI:30616"/>
        <dbReference type="ChEBI" id="CHEBI:58079"/>
        <dbReference type="ChEBI" id="CHEBI:456216"/>
        <dbReference type="EC" id="2.7.2.7"/>
    </reaction>
</comment>
<comment type="subcellular location">
    <subcellularLocation>
        <location evidence="1">Cytoplasm</location>
    </subcellularLocation>
</comment>
<comment type="similarity">
    <text evidence="1">Belongs to the acetokinase family.</text>
</comment>
<organism>
    <name type="scientific">Bacillus thuringiensis subsp. konkukian (strain 97-27)</name>
    <dbReference type="NCBI Taxonomy" id="281309"/>
    <lineage>
        <taxon>Bacteria</taxon>
        <taxon>Bacillati</taxon>
        <taxon>Bacillota</taxon>
        <taxon>Bacilli</taxon>
        <taxon>Bacillales</taxon>
        <taxon>Bacillaceae</taxon>
        <taxon>Bacillus</taxon>
        <taxon>Bacillus cereus group</taxon>
    </lineage>
</organism>
<dbReference type="EC" id="2.7.2.7" evidence="1"/>
<dbReference type="EMBL" id="AE017355">
    <property type="protein sequence ID" value="AAT60766.1"/>
    <property type="molecule type" value="Genomic_DNA"/>
</dbReference>
<dbReference type="RefSeq" id="WP_000115773.1">
    <property type="nucleotide sequence ID" value="NC_005957.1"/>
</dbReference>
<dbReference type="RefSeq" id="YP_038226.1">
    <property type="nucleotide sequence ID" value="NC_005957.1"/>
</dbReference>
<dbReference type="SMR" id="Q6HE00"/>
<dbReference type="GeneID" id="45024047"/>
<dbReference type="KEGG" id="btk:BT9727_3907"/>
<dbReference type="PATRIC" id="fig|281309.8.peg.4168"/>
<dbReference type="HOGENOM" id="CLU_048716_0_0_9"/>
<dbReference type="Proteomes" id="UP000001301">
    <property type="component" value="Chromosome"/>
</dbReference>
<dbReference type="GO" id="GO:0005737">
    <property type="term" value="C:cytoplasm"/>
    <property type="evidence" value="ECO:0007669"/>
    <property type="project" value="UniProtKB-SubCell"/>
</dbReference>
<dbReference type="GO" id="GO:0008776">
    <property type="term" value="F:acetate kinase activity"/>
    <property type="evidence" value="ECO:0007669"/>
    <property type="project" value="TreeGrafter"/>
</dbReference>
<dbReference type="GO" id="GO:0005524">
    <property type="term" value="F:ATP binding"/>
    <property type="evidence" value="ECO:0007669"/>
    <property type="project" value="UniProtKB-KW"/>
</dbReference>
<dbReference type="GO" id="GO:0047761">
    <property type="term" value="F:butyrate kinase activity"/>
    <property type="evidence" value="ECO:0007669"/>
    <property type="project" value="UniProtKB-UniRule"/>
</dbReference>
<dbReference type="GO" id="GO:0006083">
    <property type="term" value="P:acetate metabolic process"/>
    <property type="evidence" value="ECO:0007669"/>
    <property type="project" value="TreeGrafter"/>
</dbReference>
<dbReference type="CDD" id="cd24011">
    <property type="entry name" value="ASKHA_NBD_BK"/>
    <property type="match status" value="1"/>
</dbReference>
<dbReference type="Gene3D" id="3.30.420.40">
    <property type="match status" value="2"/>
</dbReference>
<dbReference type="HAMAP" id="MF_00542">
    <property type="entry name" value="Butyrate_kinase"/>
    <property type="match status" value="1"/>
</dbReference>
<dbReference type="InterPro" id="IPR000890">
    <property type="entry name" value="Aliphatic_acid_kin_short-chain"/>
</dbReference>
<dbReference type="InterPro" id="IPR023865">
    <property type="entry name" value="Aliphatic_acid_kinase_CS"/>
</dbReference>
<dbReference type="InterPro" id="IPR043129">
    <property type="entry name" value="ATPase_NBD"/>
</dbReference>
<dbReference type="InterPro" id="IPR011245">
    <property type="entry name" value="Butyrate_kin"/>
</dbReference>
<dbReference type="NCBIfam" id="TIGR02707">
    <property type="entry name" value="butyr_kinase"/>
    <property type="match status" value="1"/>
</dbReference>
<dbReference type="NCBIfam" id="NF002834">
    <property type="entry name" value="PRK03011.1-5"/>
    <property type="match status" value="1"/>
</dbReference>
<dbReference type="PANTHER" id="PTHR21060">
    <property type="entry name" value="ACETATE KINASE"/>
    <property type="match status" value="1"/>
</dbReference>
<dbReference type="PANTHER" id="PTHR21060:SF3">
    <property type="entry name" value="BUTYRATE KINASE 2-RELATED"/>
    <property type="match status" value="1"/>
</dbReference>
<dbReference type="Pfam" id="PF00871">
    <property type="entry name" value="Acetate_kinase"/>
    <property type="match status" value="1"/>
</dbReference>
<dbReference type="PIRSF" id="PIRSF036458">
    <property type="entry name" value="Butyrate_kin"/>
    <property type="match status" value="1"/>
</dbReference>
<dbReference type="PRINTS" id="PR00471">
    <property type="entry name" value="ACETATEKNASE"/>
</dbReference>
<dbReference type="SUPFAM" id="SSF53067">
    <property type="entry name" value="Actin-like ATPase domain"/>
    <property type="match status" value="2"/>
</dbReference>
<dbReference type="PROSITE" id="PS01075">
    <property type="entry name" value="ACETATE_KINASE_1"/>
    <property type="match status" value="1"/>
</dbReference>
<dbReference type="PROSITE" id="PS01076">
    <property type="entry name" value="ACETATE_KINASE_2"/>
    <property type="match status" value="1"/>
</dbReference>
<reference key="1">
    <citation type="journal article" date="2006" name="J. Bacteriol.">
        <title>Pathogenomic sequence analysis of Bacillus cereus and Bacillus thuringiensis isolates closely related to Bacillus anthracis.</title>
        <authorList>
            <person name="Han C.S."/>
            <person name="Xie G."/>
            <person name="Challacombe J.F."/>
            <person name="Altherr M.R."/>
            <person name="Bhotika S.S."/>
            <person name="Bruce D."/>
            <person name="Campbell C.S."/>
            <person name="Campbell M.L."/>
            <person name="Chen J."/>
            <person name="Chertkov O."/>
            <person name="Cleland C."/>
            <person name="Dimitrijevic M."/>
            <person name="Doggett N.A."/>
            <person name="Fawcett J.J."/>
            <person name="Glavina T."/>
            <person name="Goodwin L.A."/>
            <person name="Hill K.K."/>
            <person name="Hitchcock P."/>
            <person name="Jackson P.J."/>
            <person name="Keim P."/>
            <person name="Kewalramani A.R."/>
            <person name="Longmire J."/>
            <person name="Lucas S."/>
            <person name="Malfatti S."/>
            <person name="McMurry K."/>
            <person name="Meincke L.J."/>
            <person name="Misra M."/>
            <person name="Moseman B.L."/>
            <person name="Mundt M."/>
            <person name="Munk A.C."/>
            <person name="Okinaka R.T."/>
            <person name="Parson-Quintana B."/>
            <person name="Reilly L.P."/>
            <person name="Richardson P."/>
            <person name="Robinson D.L."/>
            <person name="Rubin E."/>
            <person name="Saunders E."/>
            <person name="Tapia R."/>
            <person name="Tesmer J.G."/>
            <person name="Thayer N."/>
            <person name="Thompson L.S."/>
            <person name="Tice H."/>
            <person name="Ticknor L.O."/>
            <person name="Wills P.L."/>
            <person name="Brettin T.S."/>
            <person name="Gilna P."/>
        </authorList>
    </citation>
    <scope>NUCLEOTIDE SEQUENCE [LARGE SCALE GENOMIC DNA]</scope>
    <source>
        <strain>97-27</strain>
    </source>
</reference>
<sequence>MSVNRILVINPGSTSTKIGVFDNERPVLEETIRHDEEQIGKYKRIIDQYEFRKETILEVLHSHGINISKLNAVCGRGGLLRPIEGGTYTVNDAMLEDLKNGFSGHHASNLGGILAYEIASGLNIPAFIVDPVVVDEMEPIARISGIAGMERKSIFHALNQKAVARKVAEELNHKYEDLNLLVTHMGGGITVGAHKKGKVIDVNNGLNGEGPFSPERAGTVPVGQLVEMCFSGEYYRDEMVKKLVGQGGLVSLIGTNDAIKVEQMVEKGDPEATLIYKAMAYQVAKEIGGASAVLHGKIDAIVLTGGLAYSKILVDEIKERVDWIADVIVHPGEDELQALAEGALRVLREEEAPKEYIVREKETVARG</sequence>
<keyword id="KW-0067">ATP-binding</keyword>
<keyword id="KW-0963">Cytoplasm</keyword>
<keyword id="KW-0418">Kinase</keyword>
<keyword id="KW-0547">Nucleotide-binding</keyword>
<keyword id="KW-0808">Transferase</keyword>
<gene>
    <name evidence="1" type="primary">buk</name>
    <name type="ordered locus">BT9727_3907</name>
</gene>